<organism>
    <name type="scientific">Macaca fascicularis</name>
    <name type="common">Crab-eating macaque</name>
    <name type="synonym">Cynomolgus monkey</name>
    <dbReference type="NCBI Taxonomy" id="9541"/>
    <lineage>
        <taxon>Eukaryota</taxon>
        <taxon>Metazoa</taxon>
        <taxon>Chordata</taxon>
        <taxon>Craniata</taxon>
        <taxon>Vertebrata</taxon>
        <taxon>Euteleostomi</taxon>
        <taxon>Mammalia</taxon>
        <taxon>Eutheria</taxon>
        <taxon>Euarchontoglires</taxon>
        <taxon>Primates</taxon>
        <taxon>Haplorrhini</taxon>
        <taxon>Catarrhini</taxon>
        <taxon>Cercopithecidae</taxon>
        <taxon>Cercopithecinae</taxon>
        <taxon>Macaca</taxon>
    </lineage>
</organism>
<keyword id="KW-0067">ATP-binding</keyword>
<keyword id="KW-0963">Cytoplasm</keyword>
<keyword id="KW-1015">Disulfide bond</keyword>
<keyword id="KW-0446">Lipid-binding</keyword>
<keyword id="KW-0547">Nucleotide-binding</keyword>
<keyword id="KW-0597">Phosphoprotein</keyword>
<keyword id="KW-0646">Protease inhibitor</keyword>
<keyword id="KW-1185">Reference proteome</keyword>
<keyword id="KW-0722">Serine protease inhibitor</keyword>
<feature type="chain" id="PRO_0000023273" description="Phosphatidylethanolamine-binding protein 1">
    <location>
        <begin position="1"/>
        <end position="187"/>
    </location>
</feature>
<feature type="peptide" id="PRO_0000023274" description="Hippocampal cholinergic neurostimulating peptide">
    <location>
        <begin position="1"/>
        <end position="12"/>
    </location>
</feature>
<feature type="region of interest" description="Interaction with RAF1" evidence="1">
    <location>
        <begin position="93"/>
        <end position="134"/>
    </location>
</feature>
<feature type="modified residue" description="Phosphoserine" evidence="2">
    <location>
        <position position="6"/>
    </location>
</feature>
<feature type="modified residue" description="Phosphoserine" evidence="3">
    <location>
        <position position="13"/>
    </location>
</feature>
<feature type="modified residue" description="Phosphothreonine" evidence="2">
    <location>
        <position position="42"/>
    </location>
</feature>
<feature type="modified residue" description="Phosphoserine" evidence="2">
    <location>
        <position position="52"/>
    </location>
</feature>
<feature type="modified residue" description="Phosphoserine" evidence="2">
    <location>
        <position position="54"/>
    </location>
</feature>
<feature type="modified residue" description="Phosphoserine" evidence="2">
    <location>
        <position position="98"/>
    </location>
</feature>
<feature type="modified residue" description="Phosphoserine" evidence="2">
    <location>
        <position position="153"/>
    </location>
</feature>
<evidence type="ECO:0000250" key="1"/>
<evidence type="ECO:0000250" key="2">
    <source>
        <dbReference type="UniProtKB" id="P30086"/>
    </source>
</evidence>
<evidence type="ECO:0000250" key="3">
    <source>
        <dbReference type="UniProtKB" id="P31044"/>
    </source>
</evidence>
<evidence type="ECO:0000305" key="4"/>
<comment type="function">
    <text evidence="1">Binds ATP, opioids and phosphatidylethanolamine. Has lower affinity for phosphatidylinositol and phosphatidylcholine. Serine protease inhibitor which inhibits thrombin, neuropsin and chymotrypsin but not trypsin, tissue type plasminogen activator and elastase (By similarity). Inhibits the kinase activity of RAF1 by inhibiting its activation and by dissociating the RAF1/MEK complex and acting as a competitive inhibitor of MEK phosphorylation (By similarity).</text>
</comment>
<comment type="function">
    <text evidence="1">HCNP may be involved in the function of the presynaptic cholinergic neurons of the central nervous system. HCNP increases the production of choline acetyltransferase but not acetylcholinesterase. Seems to be mediated by a specific receptor (By similarity).</text>
</comment>
<comment type="subunit">
    <text evidence="1">Has a tendency to form dimers by disulfide cross-linking. Interacts with RAF1 and this interaction is enhanced if RAF1 is phosphorylated on residues 'Ser-338', 'Ser-339', 'Tyr-340' and 'Tyr-341'. Interacts with ALOX15; in response to IL13/interleukin-13, prevents the interaction of PEBP1 with RAF1 to activate the ERK signaling cascade (By similarity).</text>
</comment>
<comment type="subcellular location">
    <subcellularLocation>
        <location>Cytoplasm</location>
    </subcellularLocation>
</comment>
<comment type="similarity">
    <text evidence="4">Belongs to the phosphatidylethanolamine-binding protein family.</text>
</comment>
<accession>P48737</accession>
<sequence length="187" mass="20898">MPVDLSKWSGPLSLQEVDEQPQHPLHVTYAGAALDELGKVLTPTQVKNRPTSISWDGLDSGKLYTLVLTDPDAPSRKDPKYREWHHFLVVNMKGNDISSGTVLSDYVGSGPPKGTGLHRYVWLVYEQARPLKCDEPILSNRSGDHRGKFKVASFRKKYELGAPVAGACYQAEWDDYVPKLYEQLSGK</sequence>
<name>PEBP1_MACFA</name>
<gene>
    <name type="primary">PEBP1</name>
    <name type="synonym">PBP</name>
    <name type="synonym">PEBP</name>
</gene>
<protein>
    <recommendedName>
        <fullName>Phosphatidylethanolamine-binding protein 1</fullName>
        <shortName>PEBP-1</shortName>
    </recommendedName>
    <alternativeName>
        <fullName>HCNPpp</fullName>
    </alternativeName>
    <component>
        <recommendedName>
            <fullName>Hippocampal cholinergic neurostimulating peptide</fullName>
            <shortName>HCNP</shortName>
        </recommendedName>
    </component>
</protein>
<dbReference type="EMBL" id="X73137">
    <property type="protein sequence ID" value="CAA51652.1"/>
    <property type="molecule type" value="mRNA"/>
</dbReference>
<dbReference type="PIR" id="S46485">
    <property type="entry name" value="S46485"/>
</dbReference>
<dbReference type="RefSeq" id="XP_005572423.2">
    <property type="nucleotide sequence ID" value="XM_005572366.4"/>
</dbReference>
<dbReference type="BMRB" id="P48737"/>
<dbReference type="SMR" id="P48737"/>
<dbReference type="STRING" id="9541.ENSMFAP00000019237"/>
<dbReference type="MEROPS" id="I51.002"/>
<dbReference type="GeneID" id="102127496"/>
<dbReference type="KEGG" id="mcf:102127496"/>
<dbReference type="CTD" id="5037"/>
<dbReference type="VEuPathDB" id="HostDB:ENSMFAG00000032635"/>
<dbReference type="eggNOG" id="KOG3346">
    <property type="taxonomic scope" value="Eukaryota"/>
</dbReference>
<dbReference type="OMA" id="QEVICYE"/>
<dbReference type="OrthoDB" id="101at314294"/>
<dbReference type="Proteomes" id="UP000233100">
    <property type="component" value="Chromosome 11"/>
</dbReference>
<dbReference type="GO" id="GO:0005737">
    <property type="term" value="C:cytoplasm"/>
    <property type="evidence" value="ECO:0007669"/>
    <property type="project" value="UniProtKB-SubCell"/>
</dbReference>
<dbReference type="GO" id="GO:0005524">
    <property type="term" value="F:ATP binding"/>
    <property type="evidence" value="ECO:0007669"/>
    <property type="project" value="UniProtKB-KW"/>
</dbReference>
<dbReference type="GO" id="GO:0008289">
    <property type="term" value="F:lipid binding"/>
    <property type="evidence" value="ECO:0007669"/>
    <property type="project" value="UniProtKB-KW"/>
</dbReference>
<dbReference type="GO" id="GO:0004867">
    <property type="term" value="F:serine-type endopeptidase inhibitor activity"/>
    <property type="evidence" value="ECO:0007669"/>
    <property type="project" value="UniProtKB-KW"/>
</dbReference>
<dbReference type="GO" id="GO:0043409">
    <property type="term" value="P:negative regulation of MAPK cascade"/>
    <property type="evidence" value="ECO:0007669"/>
    <property type="project" value="TreeGrafter"/>
</dbReference>
<dbReference type="CDD" id="cd00866">
    <property type="entry name" value="PEBP_euk"/>
    <property type="match status" value="1"/>
</dbReference>
<dbReference type="FunFam" id="3.90.280.10:FF:000003">
    <property type="entry name" value="phosphatidylethanolamine-binding protein 1"/>
    <property type="match status" value="1"/>
</dbReference>
<dbReference type="Gene3D" id="3.90.280.10">
    <property type="entry name" value="PEBP-like"/>
    <property type="match status" value="1"/>
</dbReference>
<dbReference type="InterPro" id="IPR008914">
    <property type="entry name" value="PEBP"/>
</dbReference>
<dbReference type="InterPro" id="IPR036610">
    <property type="entry name" value="PEBP-like_sf"/>
</dbReference>
<dbReference type="InterPro" id="IPR035810">
    <property type="entry name" value="PEBP_euk"/>
</dbReference>
<dbReference type="InterPro" id="IPR001858">
    <property type="entry name" value="Phosphatidylethanolamine-bd_CS"/>
</dbReference>
<dbReference type="PANTHER" id="PTHR11362">
    <property type="entry name" value="PHOSPHATIDYLETHANOLAMINE-BINDING PROTEIN"/>
    <property type="match status" value="1"/>
</dbReference>
<dbReference type="PANTHER" id="PTHR11362:SF151">
    <property type="entry name" value="PHOSPHATIDYLETHANOLAMINE-BINDING PROTEIN 1"/>
    <property type="match status" value="1"/>
</dbReference>
<dbReference type="Pfam" id="PF01161">
    <property type="entry name" value="PBP"/>
    <property type="match status" value="1"/>
</dbReference>
<dbReference type="SUPFAM" id="SSF49777">
    <property type="entry name" value="PEBP-like"/>
    <property type="match status" value="1"/>
</dbReference>
<dbReference type="PROSITE" id="PS01220">
    <property type="entry name" value="PBP"/>
    <property type="match status" value="1"/>
</dbReference>
<reference key="1">
    <citation type="journal article" date="1994" name="Biochem. J.">
        <title>Sequence analysis of a mammalian phospholipid-binding protein from testis and epididymis and its distribution between spermatozoa and extracellular secretions.</title>
        <authorList>
            <person name="Perry A.C.F."/>
            <person name="Hall L."/>
            <person name="Bell A.E."/>
            <person name="Jones R."/>
        </authorList>
    </citation>
    <scope>NUCLEOTIDE SEQUENCE [MRNA]</scope>
    <source>
        <tissue>Epididymis</tissue>
        <tissue>Testis</tissue>
    </source>
</reference>
<proteinExistence type="evidence at transcript level"/>